<comment type="function">
    <text evidence="1">Nucleoside triphosphate pyrophosphatase that hydrolyzes 7-methyl-GTP (m(7)GTP). May have a dual role in cell division arrest and in preventing the incorporation of modified nucleotides into cellular nucleic acids.</text>
</comment>
<comment type="catalytic activity">
    <reaction evidence="1">
        <text>N(7)-methyl-GTP + H2O = N(7)-methyl-GMP + diphosphate + H(+)</text>
        <dbReference type="Rhea" id="RHEA:58744"/>
        <dbReference type="ChEBI" id="CHEBI:15377"/>
        <dbReference type="ChEBI" id="CHEBI:15378"/>
        <dbReference type="ChEBI" id="CHEBI:33019"/>
        <dbReference type="ChEBI" id="CHEBI:58285"/>
        <dbReference type="ChEBI" id="CHEBI:87133"/>
    </reaction>
</comment>
<comment type="cofactor">
    <cofactor evidence="1">
        <name>a divalent metal cation</name>
        <dbReference type="ChEBI" id="CHEBI:60240"/>
    </cofactor>
</comment>
<comment type="subcellular location">
    <subcellularLocation>
        <location evidence="1">Cytoplasm</location>
    </subcellularLocation>
</comment>
<comment type="similarity">
    <text evidence="1">Belongs to the Maf family. YceF subfamily.</text>
</comment>
<keyword id="KW-0963">Cytoplasm</keyword>
<keyword id="KW-0378">Hydrolase</keyword>
<keyword id="KW-0546">Nucleotide metabolism</keyword>
<dbReference type="EC" id="3.6.1.-" evidence="1"/>
<dbReference type="EMBL" id="BX897699">
    <property type="protein sequence ID" value="CAF26818.1"/>
    <property type="molecule type" value="Genomic_DNA"/>
</dbReference>
<dbReference type="RefSeq" id="WP_011179972.1">
    <property type="nucleotide sequence ID" value="NZ_LRIJ02000001.1"/>
</dbReference>
<dbReference type="SMR" id="Q6G5B0"/>
<dbReference type="PaxDb" id="283166-BH00020"/>
<dbReference type="EnsemblBacteria" id="CAF26818">
    <property type="protein sequence ID" value="CAF26818"/>
    <property type="gene ID" value="BH00020"/>
</dbReference>
<dbReference type="KEGG" id="bhe:BH00020"/>
<dbReference type="eggNOG" id="COG0424">
    <property type="taxonomic scope" value="Bacteria"/>
</dbReference>
<dbReference type="OrthoDB" id="9813962at2"/>
<dbReference type="Proteomes" id="UP000000421">
    <property type="component" value="Chromosome"/>
</dbReference>
<dbReference type="GO" id="GO:0005737">
    <property type="term" value="C:cytoplasm"/>
    <property type="evidence" value="ECO:0007669"/>
    <property type="project" value="UniProtKB-SubCell"/>
</dbReference>
<dbReference type="GO" id="GO:0047429">
    <property type="term" value="F:nucleoside triphosphate diphosphatase activity"/>
    <property type="evidence" value="ECO:0007669"/>
    <property type="project" value="InterPro"/>
</dbReference>
<dbReference type="GO" id="GO:0009117">
    <property type="term" value="P:nucleotide metabolic process"/>
    <property type="evidence" value="ECO:0007669"/>
    <property type="project" value="UniProtKB-KW"/>
</dbReference>
<dbReference type="CDD" id="cd00555">
    <property type="entry name" value="Maf"/>
    <property type="match status" value="1"/>
</dbReference>
<dbReference type="Gene3D" id="3.90.950.10">
    <property type="match status" value="1"/>
</dbReference>
<dbReference type="HAMAP" id="MF_00528">
    <property type="entry name" value="Maf"/>
    <property type="match status" value="1"/>
</dbReference>
<dbReference type="InterPro" id="IPR029001">
    <property type="entry name" value="ITPase-like_fam"/>
</dbReference>
<dbReference type="InterPro" id="IPR003697">
    <property type="entry name" value="Maf-like"/>
</dbReference>
<dbReference type="NCBIfam" id="TIGR00172">
    <property type="entry name" value="maf"/>
    <property type="match status" value="1"/>
</dbReference>
<dbReference type="PANTHER" id="PTHR43213">
    <property type="entry name" value="BIFUNCTIONAL DTTP/UTP PYROPHOSPHATASE/METHYLTRANSFERASE PROTEIN-RELATED"/>
    <property type="match status" value="1"/>
</dbReference>
<dbReference type="PANTHER" id="PTHR43213:SF5">
    <property type="entry name" value="BIFUNCTIONAL DTTP_UTP PYROPHOSPHATASE_METHYLTRANSFERASE PROTEIN-RELATED"/>
    <property type="match status" value="1"/>
</dbReference>
<dbReference type="Pfam" id="PF02545">
    <property type="entry name" value="Maf"/>
    <property type="match status" value="1"/>
</dbReference>
<dbReference type="PIRSF" id="PIRSF006305">
    <property type="entry name" value="Maf"/>
    <property type="match status" value="1"/>
</dbReference>
<dbReference type="SUPFAM" id="SSF52972">
    <property type="entry name" value="ITPase-like"/>
    <property type="match status" value="1"/>
</dbReference>
<reference key="1">
    <citation type="journal article" date="2004" name="Proc. Natl. Acad. Sci. U.S.A.">
        <title>The louse-borne human pathogen Bartonella quintana is a genomic derivative of the zoonotic agent Bartonella henselae.</title>
        <authorList>
            <person name="Alsmark U.C.M."/>
            <person name="Frank A.C."/>
            <person name="Karlberg E.O."/>
            <person name="Legault B.-A."/>
            <person name="Ardell D.H."/>
            <person name="Canbaeck B."/>
            <person name="Eriksson A.-S."/>
            <person name="Naeslund A.K."/>
            <person name="Handley S.A."/>
            <person name="Huvet M."/>
            <person name="La Scola B."/>
            <person name="Holmberg M."/>
            <person name="Andersson S.G.E."/>
        </authorList>
    </citation>
    <scope>NUCLEOTIDE SEQUENCE [LARGE SCALE GENOMIC DNA]</scope>
    <source>
        <strain>ATCC 49882 / DSM 28221 / CCUG 30454 / Houston 1</strain>
    </source>
</reference>
<protein>
    <recommendedName>
        <fullName evidence="1">7-methyl-GTP pyrophosphatase</fullName>
        <shortName evidence="1">m(7)GTP pyrophosphatase</shortName>
        <ecNumber evidence="1">3.6.1.-</ecNumber>
    </recommendedName>
</protein>
<organism>
    <name type="scientific">Bartonella henselae (strain ATCC 49882 / DSM 28221 / CCUG 30454 / Houston 1)</name>
    <name type="common">Rochalimaea henselae</name>
    <dbReference type="NCBI Taxonomy" id="283166"/>
    <lineage>
        <taxon>Bacteria</taxon>
        <taxon>Pseudomonadati</taxon>
        <taxon>Pseudomonadota</taxon>
        <taxon>Alphaproteobacteria</taxon>
        <taxon>Hyphomicrobiales</taxon>
        <taxon>Bartonellaceae</taxon>
        <taxon>Bartonella</taxon>
    </lineage>
</organism>
<proteinExistence type="inferred from homology"/>
<sequence>MLAETLILASLSSYRAQLLKKAGLNFFVKGASFDEREVEKTGKTKNPKELSCFLASAKAKNVSERFPEALVIGCDQILDLEGQVFHKVKSIEEAHQRLCILSGKIHSLHSAVALFQNGQEIWVEAFSAHMSVRPLSSEFIERYLARVETDILNSVGVYQIEGEGIHLFEKIEGDFFTIIGLPLLPLLIKLRHFEVIDG</sequence>
<evidence type="ECO:0000255" key="1">
    <source>
        <dbReference type="HAMAP-Rule" id="MF_00528"/>
    </source>
</evidence>
<name>NTPPB_BARHE</name>
<gene>
    <name type="ordered locus">BH00020</name>
</gene>
<accession>Q6G5B0</accession>
<feature type="chain" id="PRO_0000267250" description="7-methyl-GTP pyrophosphatase">
    <location>
        <begin position="1"/>
        <end position="198"/>
    </location>
</feature>
<feature type="active site" description="Proton acceptor" evidence="1">
    <location>
        <position position="75"/>
    </location>
</feature>
<feature type="site" description="Important for substrate specificity" evidence="1">
    <location>
        <position position="14"/>
    </location>
</feature>
<feature type="site" description="Important for substrate specificity" evidence="1">
    <location>
        <position position="76"/>
    </location>
</feature>
<feature type="site" description="Important for substrate specificity" evidence="1">
    <location>
        <position position="161"/>
    </location>
</feature>